<comment type="alternative products">
    <event type="alternative splicing"/>
    <isoform>
        <id>Q9BXX2-1</id>
        <name>1</name>
        <sequence type="displayed"/>
    </isoform>
    <isoform>
        <id>Q9BXX2-2</id>
        <name>2</name>
        <sequence type="described" ref="VSP_032812 VSP_032813"/>
    </isoform>
</comment>
<comment type="tissue specificity">
    <text evidence="3">Expressed in brain, breast and testis.</text>
</comment>
<comment type="miscellaneous">
    <molecule>Isoform 2</molecule>
    <text evidence="6">May be produced at very low levels due to a premature stop codon in the mRNA, leading to nonsense-mediated mRNA decay.</text>
</comment>
<comment type="sequence caution" evidence="6">
    <conflict type="erroneous initiation">
        <sequence resource="EMBL-CDS" id="AAK27326"/>
    </conflict>
    <text>Truncated N-terminus.</text>
</comment>
<comment type="sequence caution" evidence="6">
    <conflict type="frameshift">
        <sequence resource="EMBL-CDS" id="AAK27326"/>
    </conflict>
</comment>
<comment type="sequence caution" evidence="6">
    <conflict type="erroneous initiation">
        <sequence resource="EMBL-CDS" id="BAG57852"/>
    </conflict>
    <text>Truncated N-terminus.</text>
</comment>
<keyword id="KW-0025">Alternative splicing</keyword>
<keyword id="KW-0040">ANK repeat</keyword>
<keyword id="KW-0175">Coiled coil</keyword>
<keyword id="KW-1185">Reference proteome</keyword>
<keyword id="KW-0677">Repeat</keyword>
<evidence type="ECO:0000255" key="1"/>
<evidence type="ECO:0000256" key="2">
    <source>
        <dbReference type="SAM" id="MobiDB-lite"/>
    </source>
</evidence>
<evidence type="ECO:0000269" key="3">
    <source>
    </source>
</evidence>
<evidence type="ECO:0000303" key="4">
    <source>
    </source>
</evidence>
<evidence type="ECO:0000303" key="5">
    <source>
    </source>
</evidence>
<evidence type="ECO:0000305" key="6"/>
<reference key="1">
    <citation type="journal article" date="2005" name="Nature">
        <title>DNA sequence and analysis of human chromosome 18.</title>
        <authorList>
            <person name="Nusbaum C."/>
            <person name="Zody M.C."/>
            <person name="Borowsky M.L."/>
            <person name="Kamal M."/>
            <person name="Kodira C.D."/>
            <person name="Taylor T.D."/>
            <person name="Whittaker C.A."/>
            <person name="Chang J.L."/>
            <person name="Cuomo C.A."/>
            <person name="Dewar K."/>
            <person name="FitzGerald M.G."/>
            <person name="Yang X."/>
            <person name="Abouelleil A."/>
            <person name="Allen N.R."/>
            <person name="Anderson S."/>
            <person name="Bloom T."/>
            <person name="Bugalter B."/>
            <person name="Butler J."/>
            <person name="Cook A."/>
            <person name="DeCaprio D."/>
            <person name="Engels R."/>
            <person name="Garber M."/>
            <person name="Gnirke A."/>
            <person name="Hafez N."/>
            <person name="Hall J.L."/>
            <person name="Norman C.H."/>
            <person name="Itoh T."/>
            <person name="Jaffe D.B."/>
            <person name="Kuroki Y."/>
            <person name="Lehoczky J."/>
            <person name="Lui A."/>
            <person name="Macdonald P."/>
            <person name="Mauceli E."/>
            <person name="Mikkelsen T.S."/>
            <person name="Naylor J.W."/>
            <person name="Nicol R."/>
            <person name="Nguyen C."/>
            <person name="Noguchi H."/>
            <person name="O'Leary S.B."/>
            <person name="Piqani B."/>
            <person name="Smith C.L."/>
            <person name="Talamas J.A."/>
            <person name="Topham K."/>
            <person name="Totoki Y."/>
            <person name="Toyoda A."/>
            <person name="Wain H.M."/>
            <person name="Young S.K."/>
            <person name="Zeng Q."/>
            <person name="Zimmer A.R."/>
            <person name="Fujiyama A."/>
            <person name="Hattori M."/>
            <person name="Birren B.W."/>
            <person name="Sakaki Y."/>
            <person name="Lander E.S."/>
        </authorList>
    </citation>
    <scope>NUCLEOTIDE SEQUENCE [LARGE SCALE GENOMIC DNA]</scope>
</reference>
<reference key="2">
    <citation type="journal article" date="2004" name="Genome Res.">
        <title>The status, quality, and expansion of the NIH full-length cDNA project: the Mammalian Gene Collection (MGC).</title>
        <authorList>
            <consortium name="The MGC Project Team"/>
        </authorList>
    </citation>
    <scope>NUCLEOTIDE SEQUENCE [LARGE SCALE MRNA] (ISOFORM 2)</scope>
    <source>
        <tissue>Testis</tissue>
    </source>
</reference>
<reference key="3">
    <citation type="journal article" date="2001" name="Cancer Res.">
        <title>Identification of a tissue-specific putative transcription factor in breast tissue by serological screening of a breast cancer library.</title>
        <authorList>
            <person name="Jaeger D."/>
            <person name="Stockert E."/>
            <person name="Guere A.O."/>
            <person name="Scanlan M.J."/>
            <person name="Karbach J."/>
            <person name="Jaeger E."/>
            <person name="Knuth A."/>
            <person name="Old L.J."/>
            <person name="Chen Y.-T."/>
        </authorList>
    </citation>
    <scope>NUCLEOTIDE SEQUENCE [MRNA] OF 1-1249 (ISOFORM 1)</scope>
    <scope>TISSUE SPECIFICITY</scope>
</reference>
<reference key="4">
    <citation type="journal article" date="2004" name="Nat. Genet.">
        <title>Complete sequencing and characterization of 21,243 full-length human cDNAs.</title>
        <authorList>
            <person name="Ota T."/>
            <person name="Suzuki Y."/>
            <person name="Nishikawa T."/>
            <person name="Otsuki T."/>
            <person name="Sugiyama T."/>
            <person name="Irie R."/>
            <person name="Wakamatsu A."/>
            <person name="Hayashi K."/>
            <person name="Sato H."/>
            <person name="Nagai K."/>
            <person name="Kimura K."/>
            <person name="Makita H."/>
            <person name="Sekine M."/>
            <person name="Obayashi M."/>
            <person name="Nishi T."/>
            <person name="Shibahara T."/>
            <person name="Tanaka T."/>
            <person name="Ishii S."/>
            <person name="Yamamoto J."/>
            <person name="Saito K."/>
            <person name="Kawai Y."/>
            <person name="Isono Y."/>
            <person name="Nakamura Y."/>
            <person name="Nagahari K."/>
            <person name="Murakami K."/>
            <person name="Yasuda T."/>
            <person name="Iwayanagi T."/>
            <person name="Wagatsuma M."/>
            <person name="Shiratori A."/>
            <person name="Sudo H."/>
            <person name="Hosoiri T."/>
            <person name="Kaku Y."/>
            <person name="Kodaira H."/>
            <person name="Kondo H."/>
            <person name="Sugawara M."/>
            <person name="Takahashi M."/>
            <person name="Kanda K."/>
            <person name="Yokoi T."/>
            <person name="Furuya T."/>
            <person name="Kikkawa E."/>
            <person name="Omura Y."/>
            <person name="Abe K."/>
            <person name="Kamihara K."/>
            <person name="Katsuta N."/>
            <person name="Sato K."/>
            <person name="Tanikawa M."/>
            <person name="Yamazaki M."/>
            <person name="Ninomiya K."/>
            <person name="Ishibashi T."/>
            <person name="Yamashita H."/>
            <person name="Murakawa K."/>
            <person name="Fujimori K."/>
            <person name="Tanai H."/>
            <person name="Kimata M."/>
            <person name="Watanabe M."/>
            <person name="Hiraoka S."/>
            <person name="Chiba Y."/>
            <person name="Ishida S."/>
            <person name="Ono Y."/>
            <person name="Takiguchi S."/>
            <person name="Watanabe S."/>
            <person name="Yosida M."/>
            <person name="Hotuta T."/>
            <person name="Kusano J."/>
            <person name="Kanehori K."/>
            <person name="Takahashi-Fujii A."/>
            <person name="Hara H."/>
            <person name="Tanase T.-O."/>
            <person name="Nomura Y."/>
            <person name="Togiya S."/>
            <person name="Komai F."/>
            <person name="Hara R."/>
            <person name="Takeuchi K."/>
            <person name="Arita M."/>
            <person name="Imose N."/>
            <person name="Musashino K."/>
            <person name="Yuuki H."/>
            <person name="Oshima A."/>
            <person name="Sasaki N."/>
            <person name="Aotsuka S."/>
            <person name="Yoshikawa Y."/>
            <person name="Matsunawa H."/>
            <person name="Ichihara T."/>
            <person name="Shiohata N."/>
            <person name="Sano S."/>
            <person name="Moriya S."/>
            <person name="Momiyama H."/>
            <person name="Satoh N."/>
            <person name="Takami S."/>
            <person name="Terashima Y."/>
            <person name="Suzuki O."/>
            <person name="Nakagawa S."/>
            <person name="Senoh A."/>
            <person name="Mizoguchi H."/>
            <person name="Goto Y."/>
            <person name="Shimizu F."/>
            <person name="Wakebe H."/>
            <person name="Hishigaki H."/>
            <person name="Watanabe T."/>
            <person name="Sugiyama A."/>
            <person name="Takemoto M."/>
            <person name="Kawakami B."/>
            <person name="Yamazaki M."/>
            <person name="Watanabe K."/>
            <person name="Kumagai A."/>
            <person name="Itakura S."/>
            <person name="Fukuzumi Y."/>
            <person name="Fujimori Y."/>
            <person name="Komiyama M."/>
            <person name="Tashiro H."/>
            <person name="Tanigami A."/>
            <person name="Fujiwara T."/>
            <person name="Ono T."/>
            <person name="Yamada K."/>
            <person name="Fujii Y."/>
            <person name="Ozaki K."/>
            <person name="Hirao M."/>
            <person name="Ohmori Y."/>
            <person name="Kawabata A."/>
            <person name="Hikiji T."/>
            <person name="Kobatake N."/>
            <person name="Inagaki H."/>
            <person name="Ikema Y."/>
            <person name="Okamoto S."/>
            <person name="Okitani R."/>
            <person name="Kawakami T."/>
            <person name="Noguchi S."/>
            <person name="Itoh T."/>
            <person name="Shigeta K."/>
            <person name="Senba T."/>
            <person name="Matsumura K."/>
            <person name="Nakajima Y."/>
            <person name="Mizuno T."/>
            <person name="Morinaga M."/>
            <person name="Sasaki M."/>
            <person name="Togashi T."/>
            <person name="Oyama M."/>
            <person name="Hata H."/>
            <person name="Watanabe M."/>
            <person name="Komatsu T."/>
            <person name="Mizushima-Sugano J."/>
            <person name="Satoh T."/>
            <person name="Shirai Y."/>
            <person name="Takahashi Y."/>
            <person name="Nakagawa K."/>
            <person name="Okumura K."/>
            <person name="Nagase T."/>
            <person name="Nomura N."/>
            <person name="Kikuchi H."/>
            <person name="Masuho Y."/>
            <person name="Yamashita R."/>
            <person name="Nakai K."/>
            <person name="Yada T."/>
            <person name="Nakamura Y."/>
            <person name="Ohara O."/>
            <person name="Isogai T."/>
            <person name="Sugano S."/>
        </authorList>
    </citation>
    <scope>NUCLEOTIDE SEQUENCE [LARGE SCALE MRNA] OF 831-1392 (ISOFORM 1)</scope>
    <source>
        <tissue>Brain</tissue>
    </source>
</reference>
<feature type="chain" id="PRO_0000416039" description="Ankyrin repeat domain-containing protein 30B">
    <location>
        <begin position="1"/>
        <end position="1392"/>
    </location>
</feature>
<feature type="repeat" description="ANK 1">
    <location>
        <begin position="72"/>
        <end position="101"/>
    </location>
</feature>
<feature type="repeat" description="ANK 2">
    <location>
        <begin position="105"/>
        <end position="134"/>
    </location>
</feature>
<feature type="repeat" description="ANK 3">
    <location>
        <begin position="138"/>
        <end position="167"/>
    </location>
</feature>
<feature type="repeat" description="ANK 4">
    <location>
        <begin position="171"/>
        <end position="200"/>
    </location>
</feature>
<feature type="repeat" description="ANK 5">
    <location>
        <begin position="204"/>
        <end position="233"/>
    </location>
</feature>
<feature type="region of interest" description="Disordered" evidence="2">
    <location>
        <begin position="1"/>
        <end position="21"/>
    </location>
</feature>
<feature type="region of interest" description="Disordered" evidence="2">
    <location>
        <begin position="265"/>
        <end position="292"/>
    </location>
</feature>
<feature type="region of interest" description="Disordered" evidence="2">
    <location>
        <begin position="558"/>
        <end position="587"/>
    </location>
</feature>
<feature type="region of interest" description="Disordered" evidence="2">
    <location>
        <begin position="636"/>
        <end position="656"/>
    </location>
</feature>
<feature type="region of interest" description="Disordered" evidence="2">
    <location>
        <begin position="671"/>
        <end position="690"/>
    </location>
</feature>
<feature type="region of interest" description="Disordered" evidence="2">
    <location>
        <begin position="830"/>
        <end position="877"/>
    </location>
</feature>
<feature type="region of interest" description="Disordered" evidence="2">
    <location>
        <begin position="904"/>
        <end position="926"/>
    </location>
</feature>
<feature type="coiled-coil region" evidence="1">
    <location>
        <begin position="960"/>
        <end position="1168"/>
    </location>
</feature>
<feature type="coiled-coil region" evidence="1">
    <location>
        <begin position="1270"/>
        <end position="1318"/>
    </location>
</feature>
<feature type="compositionally biased region" description="Polar residues" evidence="2">
    <location>
        <begin position="267"/>
        <end position="280"/>
    </location>
</feature>
<feature type="compositionally biased region" description="Polar residues" evidence="2">
    <location>
        <begin position="576"/>
        <end position="586"/>
    </location>
</feature>
<feature type="compositionally biased region" description="Basic and acidic residues" evidence="2">
    <location>
        <begin position="636"/>
        <end position="650"/>
    </location>
</feature>
<feature type="compositionally biased region" description="Polar residues" evidence="2">
    <location>
        <begin position="830"/>
        <end position="840"/>
    </location>
</feature>
<feature type="compositionally biased region" description="Basic and acidic residues" evidence="2">
    <location>
        <begin position="864"/>
        <end position="874"/>
    </location>
</feature>
<feature type="compositionally biased region" description="Basic and acidic residues" evidence="2">
    <location>
        <begin position="904"/>
        <end position="915"/>
    </location>
</feature>
<feature type="splice variant" id="VSP_032812" description="In isoform 2." evidence="5">
    <original>ESPVKDGLLKP</original>
    <variation>AYLWKESFSSK</variation>
    <location>
        <begin position="609"/>
        <end position="619"/>
    </location>
</feature>
<feature type="splice variant" id="VSP_032813" description="In isoform 2." evidence="5">
    <location>
        <begin position="620"/>
        <end position="1392"/>
    </location>
</feature>
<feature type="sequence variant" id="VAR_042540" description="In dbSNP:rs9748611.">
    <original>V</original>
    <variation>M</variation>
    <location>
        <position position="375"/>
    </location>
</feature>
<feature type="sequence variant" id="VAR_042541" description="In dbSNP:rs9675365.">
    <original>F</original>
    <variation>L</variation>
    <location>
        <position position="477"/>
    </location>
</feature>
<feature type="sequence conflict" description="In Ref. 3; AAK27326." evidence="6" ref="3">
    <original>C</original>
    <variation>R</variation>
    <location>
        <position position="248"/>
    </location>
</feature>
<feature type="sequence conflict" description="In Ref. 4; BAG57852." evidence="6" ref="4">
    <original>D</original>
    <variation>G</variation>
    <location>
        <position position="965"/>
    </location>
</feature>
<feature type="sequence conflict" description="In Ref. 3; AAK27326 and 4; BAG57852." evidence="6" ref="3 4">
    <original>T</original>
    <variation>M</variation>
    <location>
        <position position="977"/>
    </location>
</feature>
<feature type="sequence conflict" description="In Ref. 3; AAK27326." evidence="6" ref="3">
    <original>T</original>
    <variation>P</variation>
    <location>
        <position position="1015"/>
    </location>
</feature>
<feature type="sequence conflict" description="In Ref. 3; AAK27326." evidence="6" ref="3">
    <original>Q</original>
    <variation>H</variation>
    <location>
        <position position="1047"/>
    </location>
</feature>
<feature type="sequence conflict" description="In Ref. 4; BAG57852." evidence="6" ref="4">
    <original>N</original>
    <variation>K</variation>
    <location>
        <position position="1345"/>
    </location>
</feature>
<proteinExistence type="evidence at transcript level"/>
<dbReference type="EMBL" id="AP006507">
    <property type="status" value="NOT_ANNOTATED_CDS"/>
    <property type="molecule type" value="Genomic_DNA"/>
</dbReference>
<dbReference type="EMBL" id="AP006564">
    <property type="status" value="NOT_ANNOTATED_CDS"/>
    <property type="molecule type" value="Genomic_DNA"/>
</dbReference>
<dbReference type="EMBL" id="AP006565">
    <property type="status" value="NOT_ANNOTATED_CDS"/>
    <property type="molecule type" value="Genomic_DNA"/>
</dbReference>
<dbReference type="EMBL" id="BC028407">
    <property type="status" value="NOT_ANNOTATED_CDS"/>
    <property type="molecule type" value="mRNA"/>
</dbReference>
<dbReference type="EMBL" id="AF269088">
    <property type="protein sequence ID" value="AAK27326.1"/>
    <property type="status" value="ALT_SEQ"/>
    <property type="molecule type" value="mRNA"/>
</dbReference>
<dbReference type="EMBL" id="AK294693">
    <property type="protein sequence ID" value="BAG57852.1"/>
    <property type="status" value="ALT_INIT"/>
    <property type="molecule type" value="mRNA"/>
</dbReference>
<dbReference type="RefSeq" id="NP_001138501.1">
    <property type="nucleotide sequence ID" value="NM_001145029.1"/>
</dbReference>
<dbReference type="SMR" id="Q9BXX2"/>
<dbReference type="BioGRID" id="131923">
    <property type="interactions" value="8"/>
</dbReference>
<dbReference type="FunCoup" id="Q9BXX2">
    <property type="interactions" value="66"/>
</dbReference>
<dbReference type="IntAct" id="Q9BXX2">
    <property type="interactions" value="5"/>
</dbReference>
<dbReference type="MINT" id="Q9BXX2"/>
<dbReference type="STRING" id="9606.ENSP00000499676"/>
<dbReference type="GlyGen" id="Q9BXX2">
    <property type="glycosylation" value="1 site, 1 O-linked glycan (1 site)"/>
</dbReference>
<dbReference type="iPTMnet" id="Q9BXX2"/>
<dbReference type="PhosphoSitePlus" id="Q9BXX2"/>
<dbReference type="BioMuta" id="ANKRD30B"/>
<dbReference type="DMDM" id="380865477"/>
<dbReference type="jPOST" id="Q9BXX2"/>
<dbReference type="MassIVE" id="Q9BXX2"/>
<dbReference type="PaxDb" id="9606-ENSP00000351875"/>
<dbReference type="PeptideAtlas" id="Q9BXX2"/>
<dbReference type="ProteomicsDB" id="79536">
    <molecule id="Q9BXX2-1"/>
</dbReference>
<dbReference type="ProteomicsDB" id="79537">
    <molecule id="Q9BXX2-2"/>
</dbReference>
<dbReference type="TopDownProteomics" id="Q9BXX2-2">
    <molecule id="Q9BXX2-2"/>
</dbReference>
<dbReference type="Antibodypedia" id="70462">
    <property type="antibodies" value="7 antibodies from 5 providers"/>
</dbReference>
<dbReference type="Ensembl" id="ENST00000358984.9">
    <molecule id="Q9BXX2-1"/>
    <property type="protein sequence ID" value="ENSP00000351875.4"/>
    <property type="gene ID" value="ENSG00000180777.15"/>
</dbReference>
<dbReference type="Ensembl" id="ENST00000580206.1">
    <molecule id="Q9BXX2-2"/>
    <property type="protein sequence ID" value="ENSP00000463332.1"/>
    <property type="gene ID" value="ENSG00000180777.15"/>
</dbReference>
<dbReference type="UCSC" id="uc060nsr.1">
    <molecule id="Q9BXX2-1"/>
    <property type="organism name" value="human"/>
</dbReference>
<dbReference type="AGR" id="HGNC:24165"/>
<dbReference type="GeneCards" id="ANKRD30B"/>
<dbReference type="HGNC" id="HGNC:24165">
    <property type="gene designation" value="ANKRD30B"/>
</dbReference>
<dbReference type="HPA" id="ENSG00000180777">
    <property type="expression patterns" value="Tissue enriched (testis)"/>
</dbReference>
<dbReference type="MIM" id="616565">
    <property type="type" value="gene"/>
</dbReference>
<dbReference type="neXtProt" id="NX_Q9BXX2"/>
<dbReference type="OpenTargets" id="ENSG00000180777"/>
<dbReference type="PharmGKB" id="PA134980028"/>
<dbReference type="VEuPathDB" id="HostDB:ENSG00000180777"/>
<dbReference type="eggNOG" id="KOG0504">
    <property type="taxonomic scope" value="Eukaryota"/>
</dbReference>
<dbReference type="GeneTree" id="ENSGT00940000165686"/>
<dbReference type="HOGENOM" id="CLU_001111_2_2_1"/>
<dbReference type="InParanoid" id="Q9BXX2"/>
<dbReference type="OrthoDB" id="9537697at2759"/>
<dbReference type="PAN-GO" id="Q9BXX2">
    <property type="GO annotations" value="0 GO annotations based on evolutionary models"/>
</dbReference>
<dbReference type="PhylomeDB" id="Q9BXX2"/>
<dbReference type="TreeFam" id="TF333496"/>
<dbReference type="PathwayCommons" id="Q9BXX2"/>
<dbReference type="SignaLink" id="Q9BXX2"/>
<dbReference type="BioGRID-ORCS" id="374860">
    <property type="hits" value="5 hits in 1143 CRISPR screens"/>
</dbReference>
<dbReference type="CD-CODE" id="91857CE7">
    <property type="entry name" value="Nucleolus"/>
</dbReference>
<dbReference type="ChiTaRS" id="ANKRD30B">
    <property type="organism name" value="human"/>
</dbReference>
<dbReference type="GenomeRNAi" id="374860"/>
<dbReference type="Pharos" id="Q9BXX2">
    <property type="development level" value="Tdark"/>
</dbReference>
<dbReference type="PRO" id="PR:Q9BXX2"/>
<dbReference type="Proteomes" id="UP000005640">
    <property type="component" value="Chromosome 18"/>
</dbReference>
<dbReference type="RNAct" id="Q9BXX2">
    <property type="molecule type" value="protein"/>
</dbReference>
<dbReference type="Bgee" id="ENSG00000180777">
    <property type="expression patterns" value="Expressed in buccal mucosa cell and 84 other cell types or tissues"/>
</dbReference>
<dbReference type="ExpressionAtlas" id="Q9BXX2">
    <property type="expression patterns" value="baseline and differential"/>
</dbReference>
<dbReference type="Gene3D" id="1.25.40.20">
    <property type="entry name" value="Ankyrin repeat-containing domain"/>
    <property type="match status" value="2"/>
</dbReference>
<dbReference type="InterPro" id="IPR050657">
    <property type="entry name" value="Ankyrin_repeat_domain"/>
</dbReference>
<dbReference type="InterPro" id="IPR002110">
    <property type="entry name" value="Ankyrin_rpt"/>
</dbReference>
<dbReference type="InterPro" id="IPR036770">
    <property type="entry name" value="Ankyrin_rpt-contain_sf"/>
</dbReference>
<dbReference type="InterPro" id="IPR039497">
    <property type="entry name" value="CC144C-like_CC_dom"/>
</dbReference>
<dbReference type="PANTHER" id="PTHR24147">
    <property type="entry name" value="ANKYRIN REPEAT DOMAIN 36-RELATED"/>
    <property type="match status" value="1"/>
</dbReference>
<dbReference type="PANTHER" id="PTHR24147:SF52">
    <property type="entry name" value="ANKYRIN REPEAT DOMAIN-CONTAINING PROTEIN 30B"/>
    <property type="match status" value="1"/>
</dbReference>
<dbReference type="Pfam" id="PF12796">
    <property type="entry name" value="Ank_2"/>
    <property type="match status" value="2"/>
</dbReference>
<dbReference type="Pfam" id="PF14915">
    <property type="entry name" value="CCDC144C"/>
    <property type="match status" value="1"/>
</dbReference>
<dbReference type="SMART" id="SM00248">
    <property type="entry name" value="ANK"/>
    <property type="match status" value="6"/>
</dbReference>
<dbReference type="SUPFAM" id="SSF48403">
    <property type="entry name" value="Ankyrin repeat"/>
    <property type="match status" value="1"/>
</dbReference>
<dbReference type="PROSITE" id="PS50297">
    <property type="entry name" value="ANK_REP_REGION"/>
    <property type="match status" value="1"/>
</dbReference>
<dbReference type="PROSITE" id="PS50088">
    <property type="entry name" value="ANK_REPEAT"/>
    <property type="match status" value="4"/>
</dbReference>
<organism>
    <name type="scientific">Homo sapiens</name>
    <name type="common">Human</name>
    <dbReference type="NCBI Taxonomy" id="9606"/>
    <lineage>
        <taxon>Eukaryota</taxon>
        <taxon>Metazoa</taxon>
        <taxon>Chordata</taxon>
        <taxon>Craniata</taxon>
        <taxon>Vertebrata</taxon>
        <taxon>Euteleostomi</taxon>
        <taxon>Mammalia</taxon>
        <taxon>Eutheria</taxon>
        <taxon>Euarchontoglires</taxon>
        <taxon>Primates</taxon>
        <taxon>Haplorrhini</taxon>
        <taxon>Catarrhini</taxon>
        <taxon>Hominidae</taxon>
        <taxon>Homo</taxon>
    </lineage>
</organism>
<accession>Q9BXX2</accession>
<accession>B4DGP1</accession>
<accession>F8WAG3</accession>
<accession>Q4G175</accession>
<protein>
    <recommendedName>
        <fullName>Ankyrin repeat domain-containing protein 30B</fullName>
    </recommendedName>
    <alternativeName>
        <fullName evidence="4">Serologically defined breast cancer antigen NY-BR-1.1</fullName>
    </alternativeName>
</protein>
<name>AN30B_HUMAN</name>
<gene>
    <name type="primary">ANKRD30B</name>
</gene>
<sequence>MKRLLAAAGKGVRGPEPPNPFSERVYTEKDYGTIYFGDLGKIHTAASRGQVQKLEKMTVGKKPVNLNKRDMKKRTALHWACVNGHAEVVTFLVDRKCQLNVLDGEGRTPLMKALQCEREACANILIDAGADLNYVDVYGNTALHYAVYSENLLMVATLLSYGAVIEVQNKASLTPLLLAIQKRSKQTVEFLLTKNANANAFNESKCTALMLAICEGSSEIVGMLLQQNVDVFAEDIHGITAERYAAACGVNYIHQQLLEHIRKLPKNPQNTNPEGTSTGTPDEAAPLAERTPDTAESLLEKTPDEAARLVEGTSAKIQCLGKATSGKFEQSTEETPRKILRPTKETSEKFSWPAKERSRKITWEEKETSVKTECVAGVTPNKTEVLEKGTSNMIACPTKETSTKASTNVDVSSVEPIFSLFGTRTIENSQCTKVEEDFNLATKIISKSAAQNYTCLPDATYQKDIKTINHKIEDQMFPSESKREEDEEYSWDSGSLFESSAKTQVCIPESMYQKVMEINREVEELPEKPSAFKPAVEMQKTVPNKAFELKNEQTLRAAQMFPSESKQKDDEENSWDSESPCETVSQKDVYLPKATHQKEFDTLSGKLEESPVKDGLLKPTCGRKVSLPNKALELKDRETFKAESPDKDGLLKPTCGRKVSLPNKALELKDRETLKAESPDNDGLLKPTCGRKVSLPNKALELKDRETFKAAQMFPSESKQKDDEENSWDFESFLETLLQNDVCLPKATHQKEFDTLSGKLEESPDKDGLLKPTCGMKISLPNKALELKDRETFKAEDVSSVESTFSLFGKPTTENSQSTKVEEDFNLTTKEGATKTVTGQQERDIGIIERAPQDQTNKMPTSELGRKEDTKSTSDSEIISVSDTQNYECLPEATYQKEIKTTNGKIEESPEKPSHFEPATEMQNSVPNKGLEWKNKQTLRADSTTLSKILDALPSCERGRELKKDNCEQITAKMEQTKNKFCVLQKELSEAKEIKSQLENQKAKWEQELCSVRLTLNQEEEKRRNVDILKEKIRPEEQLRKKLEVKQQLEQTLRIQDIELKSVTSNLNQVSHTHESENDLFHENCMLKKEIAMLKLEVATLKHQHQVKENKYFEDIKILQEKNAELQMTLKLKQKTVTKRASQYREQLKVLTAENTMLTSKLKEKQDKEILETEIESHHPRLASALQDHDQSVTSRKNQELAFHSAGDAPLQGIMNVDVSNTIYNNEVLHQPLYEAQRKSKSPKINLNYAGDDLRENALVSEHAQRDRCETQCQMKKAEHMYQNEQDNVDKHTEQQESLEQKLFQLESKNRWLRQQLVYAHKKVNKSKVTINIQFPEMKMQRHLNEKNEEVFNYGNHLKERIDQYEKEKAEREVSIKKYKYFSNFLKESGLG</sequence>